<gene>
    <name evidence="1" type="primary">nuoH</name>
    <name type="ordered locus">COXBURSA331_A1610</name>
</gene>
<sequence length="340" mass="37995">MTDQLITLIWIIIKIVLILVPLLVAVAFITLAERKVIGYMQSRVGPNRVGFRGLAQPIADIFKLLLKEVIIPTASSRYLYLIAPILSLVPALAAWAVIPFAQGWVLANVNAGLLFLFAMTSLGVYGILVAGWASNSKYAFFGALRSAAQVVSYEIPMGFALVGVLLAAGTMNLQGIVLRQSGGLWHWFWLPLLPLFVTYWITAVAETNRAPFDVAEGESEIVAGFHVEYAGVTFALFFLAEYANMVLVSAIATVIFLGGWLSPFQGIPGLESLFAWVPGIVWFVLKLSLFIFTYFWMRATFPRYRYDQIMRLCWKVLIPVTLVWIIILALAIEFHWTHWL</sequence>
<reference key="1">
    <citation type="submission" date="2007-11" db="EMBL/GenBank/DDBJ databases">
        <title>Genome sequencing of phylogenetically and phenotypically diverse Coxiella burnetii isolates.</title>
        <authorList>
            <person name="Seshadri R."/>
            <person name="Samuel J.E."/>
        </authorList>
    </citation>
    <scope>NUCLEOTIDE SEQUENCE [LARGE SCALE GENOMIC DNA]</scope>
    <source>
        <strain>RSA 331 / Henzerling II</strain>
    </source>
</reference>
<feature type="chain" id="PRO_1000086938" description="NADH-quinone oxidoreductase subunit H">
    <location>
        <begin position="1"/>
        <end position="340"/>
    </location>
</feature>
<feature type="transmembrane region" description="Helical" evidence="1">
    <location>
        <begin position="9"/>
        <end position="29"/>
    </location>
</feature>
<feature type="transmembrane region" description="Helical" evidence="1">
    <location>
        <begin position="81"/>
        <end position="101"/>
    </location>
</feature>
<feature type="transmembrane region" description="Helical" evidence="1">
    <location>
        <begin position="113"/>
        <end position="133"/>
    </location>
</feature>
<feature type="transmembrane region" description="Helical" evidence="1">
    <location>
        <begin position="158"/>
        <end position="178"/>
    </location>
</feature>
<feature type="transmembrane region" description="Helical" evidence="1">
    <location>
        <begin position="184"/>
        <end position="204"/>
    </location>
</feature>
<feature type="transmembrane region" description="Helical" evidence="1">
    <location>
        <begin position="221"/>
        <end position="240"/>
    </location>
</feature>
<feature type="transmembrane region" description="Helical" evidence="1">
    <location>
        <begin position="245"/>
        <end position="264"/>
    </location>
</feature>
<feature type="transmembrane region" description="Helical" evidence="1">
    <location>
        <begin position="273"/>
        <end position="293"/>
    </location>
</feature>
<feature type="transmembrane region" description="Helical" evidence="1">
    <location>
        <begin position="316"/>
        <end position="336"/>
    </location>
</feature>
<comment type="function">
    <text evidence="1">NDH-1 shuttles electrons from NADH, via FMN and iron-sulfur (Fe-S) centers, to quinones in the respiratory chain. The immediate electron acceptor for the enzyme in this species is believed to be ubiquinone. Couples the redox reaction to proton translocation (for every two electrons transferred, four hydrogen ions are translocated across the cytoplasmic membrane), and thus conserves the redox energy in a proton gradient. This subunit may bind ubiquinone.</text>
</comment>
<comment type="catalytic activity">
    <reaction evidence="1">
        <text>a quinone + NADH + 5 H(+)(in) = a quinol + NAD(+) + 4 H(+)(out)</text>
        <dbReference type="Rhea" id="RHEA:57888"/>
        <dbReference type="ChEBI" id="CHEBI:15378"/>
        <dbReference type="ChEBI" id="CHEBI:24646"/>
        <dbReference type="ChEBI" id="CHEBI:57540"/>
        <dbReference type="ChEBI" id="CHEBI:57945"/>
        <dbReference type="ChEBI" id="CHEBI:132124"/>
    </reaction>
</comment>
<comment type="subunit">
    <text evidence="1">NDH-1 is composed of 14 different subunits. Subunits NuoA, H, J, K, L, M, N constitute the membrane sector of the complex.</text>
</comment>
<comment type="subcellular location">
    <subcellularLocation>
        <location evidence="1">Cell inner membrane</location>
        <topology evidence="1">Multi-pass membrane protein</topology>
    </subcellularLocation>
</comment>
<comment type="similarity">
    <text evidence="1">Belongs to the complex I subunit 1 family.</text>
</comment>
<name>NUOH_COXBR</name>
<keyword id="KW-0997">Cell inner membrane</keyword>
<keyword id="KW-1003">Cell membrane</keyword>
<keyword id="KW-0472">Membrane</keyword>
<keyword id="KW-0520">NAD</keyword>
<keyword id="KW-0874">Quinone</keyword>
<keyword id="KW-1278">Translocase</keyword>
<keyword id="KW-0812">Transmembrane</keyword>
<keyword id="KW-1133">Transmembrane helix</keyword>
<keyword id="KW-0830">Ubiquinone</keyword>
<evidence type="ECO:0000255" key="1">
    <source>
        <dbReference type="HAMAP-Rule" id="MF_01350"/>
    </source>
</evidence>
<protein>
    <recommendedName>
        <fullName evidence="1">NADH-quinone oxidoreductase subunit H</fullName>
        <ecNumber evidence="1">7.1.1.-</ecNumber>
    </recommendedName>
    <alternativeName>
        <fullName evidence="1">NADH dehydrogenase I subunit H</fullName>
    </alternativeName>
    <alternativeName>
        <fullName evidence="1">NDH-1 subunit H</fullName>
    </alternativeName>
</protein>
<accession>A9N8W5</accession>
<proteinExistence type="inferred from homology"/>
<organism>
    <name type="scientific">Coxiella burnetii (strain RSA 331 / Henzerling II)</name>
    <dbReference type="NCBI Taxonomy" id="360115"/>
    <lineage>
        <taxon>Bacteria</taxon>
        <taxon>Pseudomonadati</taxon>
        <taxon>Pseudomonadota</taxon>
        <taxon>Gammaproteobacteria</taxon>
        <taxon>Legionellales</taxon>
        <taxon>Coxiellaceae</taxon>
        <taxon>Coxiella</taxon>
    </lineage>
</organism>
<dbReference type="EC" id="7.1.1.-" evidence="1"/>
<dbReference type="EMBL" id="CP000890">
    <property type="protein sequence ID" value="ABX78507.1"/>
    <property type="molecule type" value="Genomic_DNA"/>
</dbReference>
<dbReference type="RefSeq" id="WP_005769061.1">
    <property type="nucleotide sequence ID" value="NC_010117.1"/>
</dbReference>
<dbReference type="SMR" id="A9N8W5"/>
<dbReference type="KEGG" id="cbs:COXBURSA331_A1610"/>
<dbReference type="HOGENOM" id="CLU_015134_0_1_6"/>
<dbReference type="GO" id="GO:0005886">
    <property type="term" value="C:plasma membrane"/>
    <property type="evidence" value="ECO:0007669"/>
    <property type="project" value="UniProtKB-SubCell"/>
</dbReference>
<dbReference type="GO" id="GO:0003954">
    <property type="term" value="F:NADH dehydrogenase activity"/>
    <property type="evidence" value="ECO:0007669"/>
    <property type="project" value="TreeGrafter"/>
</dbReference>
<dbReference type="GO" id="GO:0016655">
    <property type="term" value="F:oxidoreductase activity, acting on NAD(P)H, quinone or similar compound as acceptor"/>
    <property type="evidence" value="ECO:0007669"/>
    <property type="project" value="UniProtKB-UniRule"/>
</dbReference>
<dbReference type="GO" id="GO:0048038">
    <property type="term" value="F:quinone binding"/>
    <property type="evidence" value="ECO:0007669"/>
    <property type="project" value="UniProtKB-KW"/>
</dbReference>
<dbReference type="GO" id="GO:0009060">
    <property type="term" value="P:aerobic respiration"/>
    <property type="evidence" value="ECO:0007669"/>
    <property type="project" value="TreeGrafter"/>
</dbReference>
<dbReference type="HAMAP" id="MF_01350">
    <property type="entry name" value="NDH1_NuoH"/>
    <property type="match status" value="1"/>
</dbReference>
<dbReference type="InterPro" id="IPR001694">
    <property type="entry name" value="NADH_UbQ_OxRdtase_su1/FPO"/>
</dbReference>
<dbReference type="InterPro" id="IPR018086">
    <property type="entry name" value="NADH_UbQ_OxRdtase_su1_CS"/>
</dbReference>
<dbReference type="NCBIfam" id="NF004741">
    <property type="entry name" value="PRK06076.1-2"/>
    <property type="match status" value="1"/>
</dbReference>
<dbReference type="PANTHER" id="PTHR11432">
    <property type="entry name" value="NADH DEHYDROGENASE SUBUNIT 1"/>
    <property type="match status" value="1"/>
</dbReference>
<dbReference type="PANTHER" id="PTHR11432:SF3">
    <property type="entry name" value="NADH-UBIQUINONE OXIDOREDUCTASE CHAIN 1"/>
    <property type="match status" value="1"/>
</dbReference>
<dbReference type="Pfam" id="PF00146">
    <property type="entry name" value="NADHdh"/>
    <property type="match status" value="1"/>
</dbReference>
<dbReference type="PROSITE" id="PS00667">
    <property type="entry name" value="COMPLEX1_ND1_1"/>
    <property type="match status" value="1"/>
</dbReference>
<dbReference type="PROSITE" id="PS00668">
    <property type="entry name" value="COMPLEX1_ND1_2"/>
    <property type="match status" value="1"/>
</dbReference>